<dbReference type="EMBL" id="Z30281">
    <property type="protein sequence ID" value="CAA82955.1"/>
    <property type="molecule type" value="Genomic_DNA"/>
</dbReference>
<dbReference type="EnsemblMetazoa" id="XM_030167104.2">
    <property type="protein sequence ID" value="XP_030022964.2"/>
    <property type="gene ID" value="LOC115442128"/>
</dbReference>
<dbReference type="OrthoDB" id="10015593at2759"/>
<dbReference type="GO" id="GO:0005634">
    <property type="term" value="C:nucleus"/>
    <property type="evidence" value="ECO:0007669"/>
    <property type="project" value="UniProtKB-SubCell"/>
</dbReference>
<dbReference type="GO" id="GO:0003700">
    <property type="term" value="F:DNA-binding transcription factor activity"/>
    <property type="evidence" value="ECO:0007669"/>
    <property type="project" value="TreeGrafter"/>
</dbReference>
<dbReference type="GO" id="GO:0000978">
    <property type="term" value="F:RNA polymerase II cis-regulatory region sequence-specific DNA binding"/>
    <property type="evidence" value="ECO:0007669"/>
    <property type="project" value="TreeGrafter"/>
</dbReference>
<dbReference type="GO" id="GO:0008270">
    <property type="term" value="F:zinc ion binding"/>
    <property type="evidence" value="ECO:0007669"/>
    <property type="project" value="UniProtKB-KW"/>
</dbReference>
<dbReference type="GO" id="GO:0006357">
    <property type="term" value="P:regulation of transcription by RNA polymerase II"/>
    <property type="evidence" value="ECO:0007669"/>
    <property type="project" value="TreeGrafter"/>
</dbReference>
<dbReference type="GO" id="GO:0035282">
    <property type="term" value="P:segmentation"/>
    <property type="evidence" value="ECO:0007669"/>
    <property type="project" value="UniProtKB-KW"/>
</dbReference>
<dbReference type="FunFam" id="3.30.160.60:FF:001301">
    <property type="entry name" value="Blast:Protein hunchback"/>
    <property type="match status" value="1"/>
</dbReference>
<dbReference type="Gene3D" id="3.30.160.60">
    <property type="entry name" value="Classic Zinc Finger"/>
    <property type="match status" value="1"/>
</dbReference>
<dbReference type="InterPro" id="IPR050589">
    <property type="entry name" value="Ikaros_C2H2-ZF"/>
</dbReference>
<dbReference type="InterPro" id="IPR036236">
    <property type="entry name" value="Znf_C2H2_sf"/>
</dbReference>
<dbReference type="InterPro" id="IPR013087">
    <property type="entry name" value="Znf_C2H2_type"/>
</dbReference>
<dbReference type="PANTHER" id="PTHR24404">
    <property type="entry name" value="ZINC FINGER PROTEIN"/>
    <property type="match status" value="1"/>
</dbReference>
<dbReference type="PANTHER" id="PTHR24404:SF55">
    <property type="entry name" value="ZINC FINGER PROTEIN PEGASUS"/>
    <property type="match status" value="1"/>
</dbReference>
<dbReference type="SMART" id="SM00355">
    <property type="entry name" value="ZnF_C2H2"/>
    <property type="match status" value="3"/>
</dbReference>
<dbReference type="SUPFAM" id="SSF57667">
    <property type="entry name" value="beta-beta-alpha zinc fingers"/>
    <property type="match status" value="1"/>
</dbReference>
<dbReference type="PROSITE" id="PS00028">
    <property type="entry name" value="ZINC_FINGER_C2H2_1"/>
    <property type="match status" value="2"/>
</dbReference>
<dbReference type="PROSITE" id="PS50157">
    <property type="entry name" value="ZINC_FINGER_C2H2_2"/>
    <property type="match status" value="1"/>
</dbReference>
<comment type="function">
    <text>Gap class segmentation protein that controls development of head structures.</text>
</comment>
<comment type="subcellular location">
    <subcellularLocation>
        <location evidence="3">Nucleus</location>
    </subcellularLocation>
</comment>
<comment type="developmental stage">
    <text>Expressed in the anterior region of the blastoderm embryo.</text>
</comment>
<comment type="similarity">
    <text evidence="3">Belongs to the hunchback C2H2-type zinc-finger protein family.</text>
</comment>
<accession>Q25514</accession>
<reference key="1">
    <citation type="journal article" date="1994" name="Proc. Natl. Acad. Sci. U.S.A.">
        <title>Drosophila mode of metamerization in the embryogenesis of the lepidopteran insect Manduca sexta.</title>
        <authorList>
            <person name="Kraft R."/>
            <person name="Jaeckle H."/>
        </authorList>
    </citation>
    <scope>NUCLEOTIDE SEQUENCE [GENOMIC DNA]</scope>
    <source>
        <tissue>Embryo</tissue>
    </source>
</reference>
<feature type="chain" id="PRO_0000046976" description="Protein hunchback">
    <location>
        <begin position="1" status="less than"/>
        <end position="327" status="greater than"/>
    </location>
</feature>
<feature type="zinc finger region" description="C2H2-type 1" evidence="1">
    <location>
        <begin position="1" status="less than"/>
        <end position="5"/>
    </location>
</feature>
<feature type="zinc finger region" description="C2H2-type 2" evidence="1">
    <location>
        <begin position="11"/>
        <end position="33"/>
    </location>
</feature>
<feature type="zinc finger region" description="C2H2-type 3" evidence="1">
    <location>
        <begin position="39"/>
        <end position="63"/>
    </location>
</feature>
<feature type="zinc finger region" description="C2H2-type 4" evidence="1">
    <location>
        <begin position="297"/>
        <end position="319"/>
    </location>
</feature>
<feature type="zinc finger region" description="C2H2-type 5" evidence="1">
    <location>
        <begin position="325"/>
        <end position="327" status="greater than"/>
    </location>
</feature>
<feature type="region of interest" description="Disordered" evidence="2">
    <location>
        <begin position="91"/>
        <end position="121"/>
    </location>
</feature>
<feature type="region of interest" description="Disordered" evidence="2">
    <location>
        <begin position="143"/>
        <end position="170"/>
    </location>
</feature>
<feature type="region of interest" description="Disordered" evidence="2">
    <location>
        <begin position="182"/>
        <end position="290"/>
    </location>
</feature>
<feature type="compositionally biased region" description="Basic and acidic residues" evidence="2">
    <location>
        <begin position="205"/>
        <end position="216"/>
    </location>
</feature>
<feature type="compositionally biased region" description="Basic and acidic residues" evidence="2">
    <location>
        <begin position="265"/>
        <end position="276"/>
    </location>
</feature>
<feature type="non-terminal residue">
    <location>
        <position position="1"/>
    </location>
</feature>
<feature type="non-terminal residue">
    <location>
        <position position="327"/>
    </location>
</feature>
<gene>
    <name type="primary">hb</name>
</gene>
<protein>
    <recommendedName>
        <fullName>Protein hunchback</fullName>
    </recommendedName>
</protein>
<sequence length="327" mass="36523">HMRNHLGSKPFQCSQCSYSCVNKSMLNSHLKSHSNVYQYRCADCNYATKYCHSLKLHLRKYQHNPAMVLNLDGTPNPLPIIDVYGTRRGPKQKPFSKMFEPQGPVSNNNQPQPPAPTHPIFGNHFPVNLPYLPPLLPHSFLFPPNNNYEQRTSPKNHEIQTEKPQQMSPPASILHQRLSYTERPLESGSTSPPPKSPPSITQTPTHREMPTEHGDDALDLTNAKTSEAGTPPPPTERATPVTPTTALKNRRKGRAFKLQPAALRLQHEDEKMRDADGSDSESDASAEVASSSAASSYTCQFCDITFGDLTMHTIHMGFHGYNDPFMC</sequence>
<name>HUNB_MANSE</name>
<proteinExistence type="evidence at transcript level"/>
<evidence type="ECO:0000255" key="1">
    <source>
        <dbReference type="PROSITE-ProRule" id="PRU00042"/>
    </source>
</evidence>
<evidence type="ECO:0000256" key="2">
    <source>
        <dbReference type="SAM" id="MobiDB-lite"/>
    </source>
</evidence>
<evidence type="ECO:0000305" key="3"/>
<keyword id="KW-0217">Developmental protein</keyword>
<keyword id="KW-0238">DNA-binding</keyword>
<keyword id="KW-0302">Gap protein</keyword>
<keyword id="KW-0479">Metal-binding</keyword>
<keyword id="KW-0539">Nucleus</keyword>
<keyword id="KW-0677">Repeat</keyword>
<keyword id="KW-0862">Zinc</keyword>
<keyword id="KW-0863">Zinc-finger</keyword>
<organism>
    <name type="scientific">Manduca sexta</name>
    <name type="common">Tobacco hawkmoth</name>
    <name type="synonym">Tobacco hornworm</name>
    <dbReference type="NCBI Taxonomy" id="7130"/>
    <lineage>
        <taxon>Eukaryota</taxon>
        <taxon>Metazoa</taxon>
        <taxon>Ecdysozoa</taxon>
        <taxon>Arthropoda</taxon>
        <taxon>Hexapoda</taxon>
        <taxon>Insecta</taxon>
        <taxon>Pterygota</taxon>
        <taxon>Neoptera</taxon>
        <taxon>Endopterygota</taxon>
        <taxon>Lepidoptera</taxon>
        <taxon>Glossata</taxon>
        <taxon>Ditrysia</taxon>
        <taxon>Bombycoidea</taxon>
        <taxon>Sphingidae</taxon>
        <taxon>Sphinginae</taxon>
        <taxon>Sphingini</taxon>
        <taxon>Manduca</taxon>
    </lineage>
</organism>